<accession>Q28W02</accession>
<evidence type="ECO:0000255" key="1">
    <source>
        <dbReference type="HAMAP-Rule" id="MF_00821"/>
    </source>
</evidence>
<protein>
    <recommendedName>
        <fullName evidence="1">Protein-export protein SecB</fullName>
    </recommendedName>
</protein>
<name>SECB_JANSC</name>
<proteinExistence type="inferred from homology"/>
<keyword id="KW-0143">Chaperone</keyword>
<keyword id="KW-0963">Cytoplasm</keyword>
<keyword id="KW-0653">Protein transport</keyword>
<keyword id="KW-1185">Reference proteome</keyword>
<keyword id="KW-0811">Translocation</keyword>
<keyword id="KW-0813">Transport</keyword>
<sequence length="171" mass="19003">MSDASANGDATEGAAPAAAQLPKMQILGQFIRDLSFENAAVQYGTATQGQPDIQVQVALDARKRTVDNQYDVIMKLKIESKTKDEDAPKSIFLIELEYGGVFLIENIAEQQLHPFLMIECPRMLFPFVRRIISDMTRDGGYPPLNLDQIDFVALYRQQIAARQAQQPVGTA</sequence>
<dbReference type="EMBL" id="CP000264">
    <property type="protein sequence ID" value="ABD53110.1"/>
    <property type="molecule type" value="Genomic_DNA"/>
</dbReference>
<dbReference type="RefSeq" id="WP_011453319.1">
    <property type="nucleotide sequence ID" value="NC_007802.1"/>
</dbReference>
<dbReference type="SMR" id="Q28W02"/>
<dbReference type="STRING" id="290400.Jann_0193"/>
<dbReference type="KEGG" id="jan:Jann_0193"/>
<dbReference type="eggNOG" id="COG1952">
    <property type="taxonomic scope" value="Bacteria"/>
</dbReference>
<dbReference type="HOGENOM" id="CLU_111574_0_0_5"/>
<dbReference type="OrthoDB" id="9795145at2"/>
<dbReference type="Proteomes" id="UP000008326">
    <property type="component" value="Chromosome"/>
</dbReference>
<dbReference type="GO" id="GO:0005737">
    <property type="term" value="C:cytoplasm"/>
    <property type="evidence" value="ECO:0007669"/>
    <property type="project" value="UniProtKB-SubCell"/>
</dbReference>
<dbReference type="GO" id="GO:0051082">
    <property type="term" value="F:unfolded protein binding"/>
    <property type="evidence" value="ECO:0007669"/>
    <property type="project" value="InterPro"/>
</dbReference>
<dbReference type="GO" id="GO:0006457">
    <property type="term" value="P:protein folding"/>
    <property type="evidence" value="ECO:0007669"/>
    <property type="project" value="UniProtKB-UniRule"/>
</dbReference>
<dbReference type="GO" id="GO:0051262">
    <property type="term" value="P:protein tetramerization"/>
    <property type="evidence" value="ECO:0007669"/>
    <property type="project" value="InterPro"/>
</dbReference>
<dbReference type="GO" id="GO:0015031">
    <property type="term" value="P:protein transport"/>
    <property type="evidence" value="ECO:0007669"/>
    <property type="project" value="UniProtKB-UniRule"/>
</dbReference>
<dbReference type="Gene3D" id="3.10.420.10">
    <property type="entry name" value="SecB-like"/>
    <property type="match status" value="1"/>
</dbReference>
<dbReference type="HAMAP" id="MF_00821">
    <property type="entry name" value="SecB"/>
    <property type="match status" value="1"/>
</dbReference>
<dbReference type="InterPro" id="IPR003708">
    <property type="entry name" value="SecB"/>
</dbReference>
<dbReference type="InterPro" id="IPR035958">
    <property type="entry name" value="SecB-like_sf"/>
</dbReference>
<dbReference type="NCBIfam" id="NF004392">
    <property type="entry name" value="PRK05751.1-3"/>
    <property type="match status" value="1"/>
</dbReference>
<dbReference type="NCBIfam" id="TIGR00809">
    <property type="entry name" value="secB"/>
    <property type="match status" value="1"/>
</dbReference>
<dbReference type="PANTHER" id="PTHR36918">
    <property type="match status" value="1"/>
</dbReference>
<dbReference type="PANTHER" id="PTHR36918:SF1">
    <property type="entry name" value="PROTEIN-EXPORT PROTEIN SECB"/>
    <property type="match status" value="1"/>
</dbReference>
<dbReference type="Pfam" id="PF02556">
    <property type="entry name" value="SecB"/>
    <property type="match status" value="1"/>
</dbReference>
<dbReference type="PRINTS" id="PR01594">
    <property type="entry name" value="SECBCHAPRONE"/>
</dbReference>
<dbReference type="SUPFAM" id="SSF54611">
    <property type="entry name" value="SecB-like"/>
    <property type="match status" value="1"/>
</dbReference>
<gene>
    <name evidence="1" type="primary">secB</name>
    <name type="ordered locus">Jann_0193</name>
</gene>
<organism>
    <name type="scientific">Jannaschia sp. (strain CCS1)</name>
    <dbReference type="NCBI Taxonomy" id="290400"/>
    <lineage>
        <taxon>Bacteria</taxon>
        <taxon>Pseudomonadati</taxon>
        <taxon>Pseudomonadota</taxon>
        <taxon>Alphaproteobacteria</taxon>
        <taxon>Rhodobacterales</taxon>
        <taxon>Roseobacteraceae</taxon>
        <taxon>Jannaschia</taxon>
    </lineage>
</organism>
<comment type="function">
    <text evidence="1">One of the proteins required for the normal export of preproteins out of the cell cytoplasm. It is a molecular chaperone that binds to a subset of precursor proteins, maintaining them in a translocation-competent state. It also specifically binds to its receptor SecA.</text>
</comment>
<comment type="subunit">
    <text evidence="1">Homotetramer, a dimer of dimers. One homotetramer interacts with 1 SecA dimer.</text>
</comment>
<comment type="subcellular location">
    <subcellularLocation>
        <location evidence="1">Cytoplasm</location>
    </subcellularLocation>
</comment>
<comment type="similarity">
    <text evidence="1">Belongs to the SecB family.</text>
</comment>
<feature type="chain" id="PRO_0000318241" description="Protein-export protein SecB">
    <location>
        <begin position="1"/>
        <end position="171"/>
    </location>
</feature>
<reference key="1">
    <citation type="submission" date="2006-02" db="EMBL/GenBank/DDBJ databases">
        <title>Complete sequence of chromosome of Jannaschia sp. CCS1.</title>
        <authorList>
            <consortium name="US DOE Joint Genome Institute"/>
            <person name="Copeland A."/>
            <person name="Lucas S."/>
            <person name="Lapidus A."/>
            <person name="Barry K."/>
            <person name="Detter J.C."/>
            <person name="Glavina del Rio T."/>
            <person name="Hammon N."/>
            <person name="Israni S."/>
            <person name="Pitluck S."/>
            <person name="Brettin T."/>
            <person name="Bruce D."/>
            <person name="Han C."/>
            <person name="Tapia R."/>
            <person name="Gilna P."/>
            <person name="Chertkov O."/>
            <person name="Saunders E."/>
            <person name="Schmutz J."/>
            <person name="Larimer F."/>
            <person name="Land M."/>
            <person name="Kyrpides N."/>
            <person name="Lykidis A."/>
            <person name="Moran M.A."/>
            <person name="Belas R."/>
            <person name="Ye W."/>
            <person name="Buchan A."/>
            <person name="Gonzalez J.M."/>
            <person name="Schell M.A."/>
            <person name="Richardson P."/>
        </authorList>
    </citation>
    <scope>NUCLEOTIDE SEQUENCE [LARGE SCALE GENOMIC DNA]</scope>
    <source>
        <strain>CCS1</strain>
    </source>
</reference>